<dbReference type="EC" id="3.2.2.-" evidence="1"/>
<dbReference type="EC" id="4.2.99.18" evidence="1"/>
<dbReference type="EMBL" id="FQ312003">
    <property type="protein sequence ID" value="CBW16808.1"/>
    <property type="molecule type" value="Genomic_DNA"/>
</dbReference>
<dbReference type="EMBL" id="AF300989">
    <property type="protein sequence ID" value="AAG28771.1"/>
    <property type="molecule type" value="Genomic_DNA"/>
</dbReference>
<dbReference type="RefSeq" id="WP_001113970.1">
    <property type="nucleotide sequence ID" value="NZ_QASL01000021.1"/>
</dbReference>
<dbReference type="SMR" id="E1W9M1"/>
<dbReference type="KEGG" id="sey:SL1344_0710"/>
<dbReference type="PATRIC" id="fig|216597.6.peg.790"/>
<dbReference type="HOGENOM" id="CLU_038423_2_2_6"/>
<dbReference type="BioCyc" id="SENT216597:SL1344_RS03680-MONOMER"/>
<dbReference type="Proteomes" id="UP000008962">
    <property type="component" value="Chromosome"/>
</dbReference>
<dbReference type="GO" id="GO:0140078">
    <property type="term" value="F:class I DNA-(apurinic or apyrimidinic site) endonuclease activity"/>
    <property type="evidence" value="ECO:0007669"/>
    <property type="project" value="UniProtKB-EC"/>
</dbReference>
<dbReference type="GO" id="GO:0003684">
    <property type="term" value="F:damaged DNA binding"/>
    <property type="evidence" value="ECO:0007669"/>
    <property type="project" value="InterPro"/>
</dbReference>
<dbReference type="GO" id="GO:0000703">
    <property type="term" value="F:oxidized pyrimidine nucleobase lesion DNA N-glycosylase activity"/>
    <property type="evidence" value="ECO:0007669"/>
    <property type="project" value="UniProtKB-UniRule"/>
</dbReference>
<dbReference type="GO" id="GO:0008270">
    <property type="term" value="F:zinc ion binding"/>
    <property type="evidence" value="ECO:0007669"/>
    <property type="project" value="UniProtKB-UniRule"/>
</dbReference>
<dbReference type="GO" id="GO:0006284">
    <property type="term" value="P:base-excision repair"/>
    <property type="evidence" value="ECO:0007669"/>
    <property type="project" value="InterPro"/>
</dbReference>
<dbReference type="CDD" id="cd08965">
    <property type="entry name" value="EcNei-like_N"/>
    <property type="match status" value="1"/>
</dbReference>
<dbReference type="FunFam" id="1.10.8.50:FF:000005">
    <property type="entry name" value="Endonuclease 8"/>
    <property type="match status" value="1"/>
</dbReference>
<dbReference type="FunFam" id="3.20.190.10:FF:000002">
    <property type="entry name" value="Endonuclease 8"/>
    <property type="match status" value="1"/>
</dbReference>
<dbReference type="Gene3D" id="1.10.8.50">
    <property type="match status" value="1"/>
</dbReference>
<dbReference type="Gene3D" id="3.20.190.10">
    <property type="entry name" value="MutM-like, N-terminal"/>
    <property type="match status" value="1"/>
</dbReference>
<dbReference type="HAMAP" id="MF_01253">
    <property type="entry name" value="Endonuclease_8"/>
    <property type="match status" value="1"/>
</dbReference>
<dbReference type="InterPro" id="IPR015886">
    <property type="entry name" value="DNA_glyclase/AP_lyase_DNA-bd"/>
</dbReference>
<dbReference type="InterPro" id="IPR015887">
    <property type="entry name" value="DNA_glyclase_Znf_dom_DNA_BS"/>
</dbReference>
<dbReference type="InterPro" id="IPR044091">
    <property type="entry name" value="EcNei-like_N"/>
</dbReference>
<dbReference type="InterPro" id="IPR023713">
    <property type="entry name" value="Endonuclease-VIII"/>
</dbReference>
<dbReference type="InterPro" id="IPR012319">
    <property type="entry name" value="FPG_cat"/>
</dbReference>
<dbReference type="InterPro" id="IPR035937">
    <property type="entry name" value="MutM-like_N-ter"/>
</dbReference>
<dbReference type="InterPro" id="IPR010979">
    <property type="entry name" value="Ribosomal_uS13-like_H2TH"/>
</dbReference>
<dbReference type="InterPro" id="IPR000214">
    <property type="entry name" value="Znf_DNA_glyclase/AP_lyase"/>
</dbReference>
<dbReference type="InterPro" id="IPR010663">
    <property type="entry name" value="Znf_FPG/IleRS"/>
</dbReference>
<dbReference type="NCBIfam" id="NF007763">
    <property type="entry name" value="PRK10445.1"/>
    <property type="match status" value="1"/>
</dbReference>
<dbReference type="PANTHER" id="PTHR42697">
    <property type="entry name" value="ENDONUCLEASE 8"/>
    <property type="match status" value="1"/>
</dbReference>
<dbReference type="PANTHER" id="PTHR42697:SF1">
    <property type="entry name" value="ENDONUCLEASE 8"/>
    <property type="match status" value="1"/>
</dbReference>
<dbReference type="Pfam" id="PF01149">
    <property type="entry name" value="Fapy_DNA_glyco"/>
    <property type="match status" value="1"/>
</dbReference>
<dbReference type="Pfam" id="PF06831">
    <property type="entry name" value="H2TH"/>
    <property type="match status" value="1"/>
</dbReference>
<dbReference type="Pfam" id="PF06827">
    <property type="entry name" value="zf-FPG_IleRS"/>
    <property type="match status" value="1"/>
</dbReference>
<dbReference type="SMART" id="SM00898">
    <property type="entry name" value="Fapy_DNA_glyco"/>
    <property type="match status" value="1"/>
</dbReference>
<dbReference type="SMART" id="SM01232">
    <property type="entry name" value="H2TH"/>
    <property type="match status" value="1"/>
</dbReference>
<dbReference type="SUPFAM" id="SSF57716">
    <property type="entry name" value="Glucocorticoid receptor-like (DNA-binding domain)"/>
    <property type="match status" value="1"/>
</dbReference>
<dbReference type="SUPFAM" id="SSF81624">
    <property type="entry name" value="N-terminal domain of MutM-like DNA repair proteins"/>
    <property type="match status" value="1"/>
</dbReference>
<dbReference type="SUPFAM" id="SSF46946">
    <property type="entry name" value="S13-like H2TH domain"/>
    <property type="match status" value="1"/>
</dbReference>
<dbReference type="PROSITE" id="PS51068">
    <property type="entry name" value="FPG_CAT"/>
    <property type="match status" value="1"/>
</dbReference>
<dbReference type="PROSITE" id="PS01242">
    <property type="entry name" value="ZF_FPG_1"/>
    <property type="match status" value="1"/>
</dbReference>
<dbReference type="PROSITE" id="PS51066">
    <property type="entry name" value="ZF_FPG_2"/>
    <property type="match status" value="1"/>
</dbReference>
<accession>E1W9M1</accession>
<accession>Q8ZQU6</accession>
<accession>Q9F612</accession>
<organism>
    <name type="scientific">Salmonella typhimurium (strain SL1344)</name>
    <dbReference type="NCBI Taxonomy" id="216597"/>
    <lineage>
        <taxon>Bacteria</taxon>
        <taxon>Pseudomonadati</taxon>
        <taxon>Pseudomonadota</taxon>
        <taxon>Gammaproteobacteria</taxon>
        <taxon>Enterobacterales</taxon>
        <taxon>Enterobacteriaceae</taxon>
        <taxon>Salmonella</taxon>
    </lineage>
</organism>
<evidence type="ECO:0000255" key="1">
    <source>
        <dbReference type="HAMAP-Rule" id="MF_01253"/>
    </source>
</evidence>
<gene>
    <name evidence="1" type="primary">nei</name>
    <name type="ordered locus">SL1344_0710</name>
</gene>
<keyword id="KW-0227">DNA damage</keyword>
<keyword id="KW-0234">DNA repair</keyword>
<keyword id="KW-0238">DNA-binding</keyword>
<keyword id="KW-0326">Glycosidase</keyword>
<keyword id="KW-0378">Hydrolase</keyword>
<keyword id="KW-0456">Lyase</keyword>
<keyword id="KW-0479">Metal-binding</keyword>
<keyword id="KW-0511">Multifunctional enzyme</keyword>
<keyword id="KW-0862">Zinc</keyword>
<keyword id="KW-0863">Zinc-finger</keyword>
<proteinExistence type="inferred from homology"/>
<comment type="function">
    <text evidence="1">Involved in base excision repair of DNA damaged by oxidation or by mutagenic agents. Acts as a DNA glycosylase that recognizes and removes damaged bases. Has a preference for oxidized pyrimidines, such as thymine glycol, 5,6-dihydrouracil and 5,6-dihydrothymine. Has AP (apurinic/apyrimidinic) lyase activity and introduces nicks in the DNA strand. Cleaves the DNA backbone by beta-delta elimination to generate a single-strand break at the site of the removed base with both 3'- and 5'-phosphates.</text>
</comment>
<comment type="catalytic activity">
    <reaction evidence="1">
        <text>2'-deoxyribonucleotide-(2'-deoxyribose 5'-phosphate)-2'-deoxyribonucleotide-DNA = a 3'-end 2'-deoxyribonucleotide-(2,3-dehydro-2,3-deoxyribose 5'-phosphate)-DNA + a 5'-end 5'-phospho-2'-deoxyribonucleoside-DNA + H(+)</text>
        <dbReference type="Rhea" id="RHEA:66592"/>
        <dbReference type="Rhea" id="RHEA-COMP:13180"/>
        <dbReference type="Rhea" id="RHEA-COMP:16897"/>
        <dbReference type="Rhea" id="RHEA-COMP:17067"/>
        <dbReference type="ChEBI" id="CHEBI:15378"/>
        <dbReference type="ChEBI" id="CHEBI:136412"/>
        <dbReference type="ChEBI" id="CHEBI:157695"/>
        <dbReference type="ChEBI" id="CHEBI:167181"/>
        <dbReference type="EC" id="4.2.99.18"/>
    </reaction>
</comment>
<comment type="cofactor">
    <cofactor evidence="1">
        <name>Zn(2+)</name>
        <dbReference type="ChEBI" id="CHEBI:29105"/>
    </cofactor>
    <text evidence="1">Binds 1 zinc ion per subunit.</text>
</comment>
<comment type="similarity">
    <text evidence="1">Belongs to the FPG family.</text>
</comment>
<sequence length="263" mass="29863">MPEGPEIRRAADNLEAAIKGKPLTDVWFAFAQLKPYESQLTGQLVTRIETRGKALLTHFSNGLTLYSHNQLYGVWRVIDTGEIPQTTRILRVRLQTADKTILLYSASDIEMLTAEQLTTHPFLQRVGPDVLDARLTPEEVKARLLSPRFRNRQFSGLLLDQSFLAGLGNYLRVEILWQVGLTGQHKAKDLNEAQLNALSHALLDIPRLSYTTRGQADENKHHGALFRFKLFHRDGEACERCGGIIEKTTLSSRPFYWCPHCQK</sequence>
<reference key="1">
    <citation type="journal article" date="2012" name="Proc. Natl. Acad. Sci. U.S.A.">
        <title>The transcriptional landscape and small RNAs of Salmonella enterica serovar Typhimurium.</title>
        <authorList>
            <person name="Kroger C."/>
            <person name="Dillon S.C."/>
            <person name="Cameron A.D."/>
            <person name="Papenfort K."/>
            <person name="Sivasankaran S.K."/>
            <person name="Hokamp K."/>
            <person name="Chao Y."/>
            <person name="Sittka A."/>
            <person name="Hebrard M."/>
            <person name="Handler K."/>
            <person name="Colgan A."/>
            <person name="Leekitcharoenphon P."/>
            <person name="Langridge G.C."/>
            <person name="Lohan A.J."/>
            <person name="Loftus B."/>
            <person name="Lucchini S."/>
            <person name="Ussery D.W."/>
            <person name="Dorman C.J."/>
            <person name="Thomson N.R."/>
            <person name="Vogel J."/>
            <person name="Hinton J.C."/>
        </authorList>
    </citation>
    <scope>NUCLEOTIDE SEQUENCE [LARGE SCALE GENOMIC DNA]</scope>
    <source>
        <strain>SL1344</strain>
    </source>
</reference>
<reference key="2">
    <citation type="submission" date="2000-08" db="EMBL/GenBank/DDBJ databases">
        <title>The redundant DNA base excision repair system of Salmonella typhimurium is conditionally required for intramacrophage survival and serves as virulence attribute.</title>
        <authorList>
            <person name="Suvarnapunya A.E."/>
            <person name="Guy R.L."/>
            <person name="Stein M.A."/>
        </authorList>
    </citation>
    <scope>NUCLEOTIDE SEQUENCE [GENOMIC DNA] OF 16-256</scope>
    <source>
        <strain>SL1344</strain>
    </source>
</reference>
<feature type="initiator methionine" description="Removed" evidence="1">
    <location>
        <position position="1"/>
    </location>
</feature>
<feature type="chain" id="PRO_0000405416" description="Endonuclease 8">
    <location>
        <begin position="2"/>
        <end position="263"/>
    </location>
</feature>
<feature type="zinc finger region" description="FPG-type" evidence="1">
    <location>
        <begin position="229"/>
        <end position="263"/>
    </location>
</feature>
<feature type="active site" description="Schiff-base intermediate with DNA" evidence="1">
    <location>
        <position position="2"/>
    </location>
</feature>
<feature type="active site" description="Proton donor" evidence="1">
    <location>
        <position position="3"/>
    </location>
</feature>
<feature type="active site" description="Proton donor; for beta-elimination activity" evidence="1">
    <location>
        <position position="53"/>
    </location>
</feature>
<feature type="active site" description="Proton donor; for delta-elimination activity" evidence="1">
    <location>
        <position position="253"/>
    </location>
</feature>
<feature type="binding site" evidence="1">
    <location>
        <position position="70"/>
    </location>
    <ligand>
        <name>DNA</name>
        <dbReference type="ChEBI" id="CHEBI:16991"/>
    </ligand>
</feature>
<feature type="binding site" evidence="1">
    <location>
        <position position="125"/>
    </location>
    <ligand>
        <name>DNA</name>
        <dbReference type="ChEBI" id="CHEBI:16991"/>
    </ligand>
</feature>
<feature type="binding site" evidence="1">
    <location>
        <position position="169"/>
    </location>
    <ligand>
        <name>DNA</name>
        <dbReference type="ChEBI" id="CHEBI:16991"/>
    </ligand>
</feature>
<name>END8_SALTS</name>
<protein>
    <recommendedName>
        <fullName evidence="1">Endonuclease 8</fullName>
    </recommendedName>
    <alternativeName>
        <fullName evidence="1">DNA glycosylase/AP lyase Nei</fullName>
        <ecNumber evidence="1">3.2.2.-</ecNumber>
        <ecNumber evidence="1">4.2.99.18</ecNumber>
    </alternativeName>
    <alternativeName>
        <fullName evidence="1">DNA-(apurinic or apyrimidinic site) lyase Nei</fullName>
    </alternativeName>
    <alternativeName>
        <fullName evidence="1">Endonuclease VIII</fullName>
    </alternativeName>
</protein>